<protein>
    <recommendedName>
        <fullName evidence="1">Flagellar L-ring protein</fullName>
    </recommendedName>
    <alternativeName>
        <fullName evidence="1">Basal body L-ring protein</fullName>
    </alternativeName>
</protein>
<name>FLGH_BUCAP</name>
<organism>
    <name type="scientific">Buchnera aphidicola subsp. Schizaphis graminum (strain Sg)</name>
    <dbReference type="NCBI Taxonomy" id="198804"/>
    <lineage>
        <taxon>Bacteria</taxon>
        <taxon>Pseudomonadati</taxon>
        <taxon>Pseudomonadota</taxon>
        <taxon>Gammaproteobacteria</taxon>
        <taxon>Enterobacterales</taxon>
        <taxon>Erwiniaceae</taxon>
        <taxon>Buchnera</taxon>
    </lineage>
</organism>
<evidence type="ECO:0000255" key="1">
    <source>
        <dbReference type="HAMAP-Rule" id="MF_00415"/>
    </source>
</evidence>
<proteinExistence type="inferred from homology"/>
<reference key="1">
    <citation type="journal article" date="2002" name="Science">
        <title>50 million years of genomic stasis in endosymbiotic bacteria.</title>
        <authorList>
            <person name="Tamas I."/>
            <person name="Klasson L."/>
            <person name="Canbaeck B."/>
            <person name="Naeslund A.K."/>
            <person name="Eriksson A.-S."/>
            <person name="Wernegreen J.J."/>
            <person name="Sandstroem J.P."/>
            <person name="Moran N.A."/>
            <person name="Andersson S.G.E."/>
        </authorList>
    </citation>
    <scope>NUCLEOTIDE SEQUENCE [LARGE SCALE GENOMIC DNA]</scope>
    <source>
        <strain>Sg</strain>
    </source>
</reference>
<keyword id="KW-0975">Bacterial flagellum</keyword>
<keyword id="KW-0998">Cell outer membrane</keyword>
<keyword id="KW-0449">Lipoprotein</keyword>
<keyword id="KW-0472">Membrane</keyword>
<keyword id="KW-0564">Palmitate</keyword>
<keyword id="KW-0732">Signal</keyword>
<comment type="function">
    <text evidence="1">Assembles around the rod to form the L-ring and probably protects the motor/basal body from shearing forces during rotation.</text>
</comment>
<comment type="subunit">
    <text evidence="1">The basal body constitutes a major portion of the flagellar organelle and consists of four rings (L,P,S, and M) mounted on a central rod.</text>
</comment>
<comment type="subcellular location">
    <subcellularLocation>
        <location evidence="1">Cell outer membrane</location>
        <topology evidence="1">Lipid-anchor</topology>
    </subcellularLocation>
    <subcellularLocation>
        <location evidence="1">Bacterial flagellum basal body</location>
    </subcellularLocation>
</comment>
<comment type="similarity">
    <text evidence="1">Belongs to the FlgH family.</text>
</comment>
<accession>Q8K9K3</accession>
<feature type="signal peptide" evidence="1">
    <location>
        <begin position="1"/>
        <end position="23"/>
    </location>
</feature>
<feature type="chain" id="PRO_0000009432" description="Flagellar L-ring protein">
    <location>
        <begin position="24"/>
        <end position="238"/>
    </location>
</feature>
<feature type="lipid moiety-binding region" description="N-palmitoyl cysteine" evidence="1">
    <location>
        <position position="24"/>
    </location>
</feature>
<feature type="lipid moiety-binding region" description="S-diacylglycerol cysteine" evidence="1">
    <location>
        <position position="24"/>
    </location>
</feature>
<sequence>MVKLFSYKIKYYLTAFFIIIIQSCASVEHKPLVDGITTAIAPNIIPKIKNGSLFQEKTPINYGYQPLFEDHRSHNIGDTITVVLQENISASNSSSSNLTRDGKANVGVTVTPGTLNPILGLNVNDNKTGIDSIGKNDFSGKGSNSAKNTFTGLITVTVKNVLPNGNLKVIGEKQVAINQGTEFIRFSGVINPNNINKNNLVASTQIADTRIEYVSNNRINDIQKMGWLQRFLLKISPI</sequence>
<gene>
    <name evidence="1" type="primary">flgH</name>
    <name type="ordered locus">BUsg_331</name>
</gene>
<dbReference type="EMBL" id="AE013218">
    <property type="protein sequence ID" value="AAM67885.1"/>
    <property type="molecule type" value="Genomic_DNA"/>
</dbReference>
<dbReference type="RefSeq" id="WP_011053852.1">
    <property type="nucleotide sequence ID" value="NC_004061.1"/>
</dbReference>
<dbReference type="SMR" id="Q8K9K3"/>
<dbReference type="STRING" id="198804.BUsg_331"/>
<dbReference type="GeneID" id="93003802"/>
<dbReference type="KEGG" id="bas:BUsg_331"/>
<dbReference type="eggNOG" id="COG2063">
    <property type="taxonomic scope" value="Bacteria"/>
</dbReference>
<dbReference type="HOGENOM" id="CLU_069313_0_0_6"/>
<dbReference type="Proteomes" id="UP000000416">
    <property type="component" value="Chromosome"/>
</dbReference>
<dbReference type="GO" id="GO:0009427">
    <property type="term" value="C:bacterial-type flagellum basal body, distal rod, L ring"/>
    <property type="evidence" value="ECO:0007669"/>
    <property type="project" value="InterPro"/>
</dbReference>
<dbReference type="GO" id="GO:0009279">
    <property type="term" value="C:cell outer membrane"/>
    <property type="evidence" value="ECO:0007669"/>
    <property type="project" value="UniProtKB-SubCell"/>
</dbReference>
<dbReference type="GO" id="GO:0003774">
    <property type="term" value="F:cytoskeletal motor activity"/>
    <property type="evidence" value="ECO:0007669"/>
    <property type="project" value="InterPro"/>
</dbReference>
<dbReference type="GO" id="GO:0071973">
    <property type="term" value="P:bacterial-type flagellum-dependent cell motility"/>
    <property type="evidence" value="ECO:0007669"/>
    <property type="project" value="InterPro"/>
</dbReference>
<dbReference type="HAMAP" id="MF_00415">
    <property type="entry name" value="FlgH"/>
    <property type="match status" value="1"/>
</dbReference>
<dbReference type="InterPro" id="IPR000527">
    <property type="entry name" value="Flag_Lring"/>
</dbReference>
<dbReference type="PANTHER" id="PTHR34933">
    <property type="entry name" value="FLAGELLAR L-RING PROTEIN"/>
    <property type="match status" value="1"/>
</dbReference>
<dbReference type="PANTHER" id="PTHR34933:SF3">
    <property type="entry name" value="FLAGELLAR L-RING PROTEIN"/>
    <property type="match status" value="1"/>
</dbReference>
<dbReference type="Pfam" id="PF02107">
    <property type="entry name" value="FlgH"/>
    <property type="match status" value="1"/>
</dbReference>
<dbReference type="PRINTS" id="PR01008">
    <property type="entry name" value="FLGLRINGFLGH"/>
</dbReference>
<dbReference type="PROSITE" id="PS51257">
    <property type="entry name" value="PROKAR_LIPOPROTEIN"/>
    <property type="match status" value="1"/>
</dbReference>